<protein>
    <recommendedName>
        <fullName evidence="1">L-lactate dehydrogenase</fullName>
        <shortName evidence="1">L-LDH</shortName>
        <ecNumber evidence="1">1.1.1.27</ecNumber>
    </recommendedName>
</protein>
<evidence type="ECO:0000255" key="1">
    <source>
        <dbReference type="HAMAP-Rule" id="MF_00488"/>
    </source>
</evidence>
<name>LDH_STAS1</name>
<comment type="function">
    <text evidence="1">Catalyzes the conversion of lactate to pyruvate.</text>
</comment>
<comment type="catalytic activity">
    <reaction evidence="1">
        <text>(S)-lactate + NAD(+) = pyruvate + NADH + H(+)</text>
        <dbReference type="Rhea" id="RHEA:23444"/>
        <dbReference type="ChEBI" id="CHEBI:15361"/>
        <dbReference type="ChEBI" id="CHEBI:15378"/>
        <dbReference type="ChEBI" id="CHEBI:16651"/>
        <dbReference type="ChEBI" id="CHEBI:57540"/>
        <dbReference type="ChEBI" id="CHEBI:57945"/>
        <dbReference type="EC" id="1.1.1.27"/>
    </reaction>
</comment>
<comment type="activity regulation">
    <text evidence="1">Allosterically activated by fructose 1,6-bisphosphate (FBP).</text>
</comment>
<comment type="pathway">
    <text evidence="1">Fermentation; pyruvate fermentation to lactate; (S)-lactate from pyruvate: step 1/1.</text>
</comment>
<comment type="subunit">
    <text evidence="1">Homotetramer.</text>
</comment>
<comment type="subcellular location">
    <subcellularLocation>
        <location evidence="1">Cytoplasm</location>
    </subcellularLocation>
</comment>
<comment type="similarity">
    <text evidence="1">Belongs to the LDH/MDH superfamily. LDH family.</text>
</comment>
<reference key="1">
    <citation type="journal article" date="2005" name="Proc. Natl. Acad. Sci. U.S.A.">
        <title>Whole genome sequence of Staphylococcus saprophyticus reveals the pathogenesis of uncomplicated urinary tract infection.</title>
        <authorList>
            <person name="Kuroda M."/>
            <person name="Yamashita A."/>
            <person name="Hirakawa H."/>
            <person name="Kumano M."/>
            <person name="Morikawa K."/>
            <person name="Higashide M."/>
            <person name="Maruyama A."/>
            <person name="Inose Y."/>
            <person name="Matoba K."/>
            <person name="Toh H."/>
            <person name="Kuhara S."/>
            <person name="Hattori M."/>
            <person name="Ohta T."/>
        </authorList>
    </citation>
    <scope>NUCLEOTIDE SEQUENCE [LARGE SCALE GENOMIC DNA]</scope>
    <source>
        <strain>ATCC 15305 / DSM 20229 / NCIMB 8711 / NCTC 7292 / S-41</strain>
    </source>
</reference>
<gene>
    <name evidence="1" type="primary">ldh</name>
    <name type="ordered locus">SSP1001</name>
</gene>
<keyword id="KW-0021">Allosteric enzyme</keyword>
<keyword id="KW-0963">Cytoplasm</keyword>
<keyword id="KW-0520">NAD</keyword>
<keyword id="KW-0560">Oxidoreductase</keyword>
<keyword id="KW-0597">Phosphoprotein</keyword>
<keyword id="KW-1185">Reference proteome</keyword>
<proteinExistence type="inferred from homology"/>
<dbReference type="EC" id="1.1.1.27" evidence="1"/>
<dbReference type="EMBL" id="AP008934">
    <property type="protein sequence ID" value="BAE18146.1"/>
    <property type="molecule type" value="Genomic_DNA"/>
</dbReference>
<dbReference type="RefSeq" id="WP_011302853.1">
    <property type="nucleotide sequence ID" value="NZ_MTGA01000033.1"/>
</dbReference>
<dbReference type="SMR" id="Q49YJ3"/>
<dbReference type="GeneID" id="3615871"/>
<dbReference type="KEGG" id="ssp:SSP1001"/>
<dbReference type="PATRIC" id="fig|342451.11.peg.1000"/>
<dbReference type="eggNOG" id="COG0039">
    <property type="taxonomic scope" value="Bacteria"/>
</dbReference>
<dbReference type="HOGENOM" id="CLU_045401_1_1_9"/>
<dbReference type="OrthoDB" id="9802969at2"/>
<dbReference type="UniPathway" id="UPA00554">
    <property type="reaction ID" value="UER00611"/>
</dbReference>
<dbReference type="Proteomes" id="UP000006371">
    <property type="component" value="Chromosome"/>
</dbReference>
<dbReference type="GO" id="GO:0005737">
    <property type="term" value="C:cytoplasm"/>
    <property type="evidence" value="ECO:0007669"/>
    <property type="project" value="UniProtKB-SubCell"/>
</dbReference>
<dbReference type="GO" id="GO:0004459">
    <property type="term" value="F:L-lactate dehydrogenase activity"/>
    <property type="evidence" value="ECO:0007669"/>
    <property type="project" value="UniProtKB-UniRule"/>
</dbReference>
<dbReference type="GO" id="GO:0006096">
    <property type="term" value="P:glycolytic process"/>
    <property type="evidence" value="ECO:0007669"/>
    <property type="project" value="UniProtKB-UniRule"/>
</dbReference>
<dbReference type="GO" id="GO:0006089">
    <property type="term" value="P:lactate metabolic process"/>
    <property type="evidence" value="ECO:0007669"/>
    <property type="project" value="TreeGrafter"/>
</dbReference>
<dbReference type="CDD" id="cd05291">
    <property type="entry name" value="HicDH_like"/>
    <property type="match status" value="1"/>
</dbReference>
<dbReference type="FunFam" id="3.40.50.720:FF:000018">
    <property type="entry name" value="Malate dehydrogenase"/>
    <property type="match status" value="1"/>
</dbReference>
<dbReference type="Gene3D" id="3.90.110.10">
    <property type="entry name" value="Lactate dehydrogenase/glycoside hydrolase, family 4, C-terminal"/>
    <property type="match status" value="1"/>
</dbReference>
<dbReference type="Gene3D" id="3.40.50.720">
    <property type="entry name" value="NAD(P)-binding Rossmann-like Domain"/>
    <property type="match status" value="1"/>
</dbReference>
<dbReference type="HAMAP" id="MF_00488">
    <property type="entry name" value="Lactate_dehydrog"/>
    <property type="match status" value="1"/>
</dbReference>
<dbReference type="InterPro" id="IPR001557">
    <property type="entry name" value="L-lactate/malate_DH"/>
</dbReference>
<dbReference type="InterPro" id="IPR011304">
    <property type="entry name" value="L-lactate_DH"/>
</dbReference>
<dbReference type="InterPro" id="IPR018177">
    <property type="entry name" value="L-lactate_DH_AS"/>
</dbReference>
<dbReference type="InterPro" id="IPR022383">
    <property type="entry name" value="Lactate/malate_DH_C"/>
</dbReference>
<dbReference type="InterPro" id="IPR001236">
    <property type="entry name" value="Lactate/malate_DH_N"/>
</dbReference>
<dbReference type="InterPro" id="IPR015955">
    <property type="entry name" value="Lactate_DH/Glyco_Ohase_4_C"/>
</dbReference>
<dbReference type="InterPro" id="IPR036291">
    <property type="entry name" value="NAD(P)-bd_dom_sf"/>
</dbReference>
<dbReference type="NCBIfam" id="TIGR01771">
    <property type="entry name" value="L-LDH-NAD"/>
    <property type="match status" value="1"/>
</dbReference>
<dbReference type="NCBIfam" id="NF000824">
    <property type="entry name" value="PRK00066.1"/>
    <property type="match status" value="1"/>
</dbReference>
<dbReference type="NCBIfam" id="NF004863">
    <property type="entry name" value="PRK06223.1"/>
    <property type="match status" value="1"/>
</dbReference>
<dbReference type="PANTHER" id="PTHR43128">
    <property type="entry name" value="L-2-HYDROXYCARBOXYLATE DEHYDROGENASE (NAD(P)(+))"/>
    <property type="match status" value="1"/>
</dbReference>
<dbReference type="PANTHER" id="PTHR43128:SF16">
    <property type="entry name" value="L-LACTATE DEHYDROGENASE"/>
    <property type="match status" value="1"/>
</dbReference>
<dbReference type="Pfam" id="PF02866">
    <property type="entry name" value="Ldh_1_C"/>
    <property type="match status" value="1"/>
</dbReference>
<dbReference type="Pfam" id="PF00056">
    <property type="entry name" value="Ldh_1_N"/>
    <property type="match status" value="1"/>
</dbReference>
<dbReference type="PIRSF" id="PIRSF000102">
    <property type="entry name" value="Lac_mal_DH"/>
    <property type="match status" value="1"/>
</dbReference>
<dbReference type="PRINTS" id="PR00086">
    <property type="entry name" value="LLDHDRGNASE"/>
</dbReference>
<dbReference type="SUPFAM" id="SSF56327">
    <property type="entry name" value="LDH C-terminal domain-like"/>
    <property type="match status" value="1"/>
</dbReference>
<dbReference type="SUPFAM" id="SSF51735">
    <property type="entry name" value="NAD(P)-binding Rossmann-fold domains"/>
    <property type="match status" value="1"/>
</dbReference>
<dbReference type="PROSITE" id="PS00064">
    <property type="entry name" value="L_LDH"/>
    <property type="match status" value="1"/>
</dbReference>
<feature type="chain" id="PRO_0000237562" description="L-lactate dehydrogenase">
    <location>
        <begin position="1"/>
        <end position="318"/>
    </location>
</feature>
<feature type="active site" description="Proton acceptor" evidence="1">
    <location>
        <position position="179"/>
    </location>
</feature>
<feature type="binding site" evidence="1">
    <location>
        <position position="17"/>
    </location>
    <ligand>
        <name>NAD(+)</name>
        <dbReference type="ChEBI" id="CHEBI:57540"/>
    </ligand>
</feature>
<feature type="binding site" evidence="1">
    <location>
        <position position="38"/>
    </location>
    <ligand>
        <name>NAD(+)</name>
        <dbReference type="ChEBI" id="CHEBI:57540"/>
    </ligand>
</feature>
<feature type="binding site" evidence="1">
    <location>
        <position position="43"/>
    </location>
    <ligand>
        <name>NAD(+)</name>
        <dbReference type="ChEBI" id="CHEBI:57540"/>
    </ligand>
</feature>
<feature type="binding site" evidence="1">
    <location>
        <position position="69"/>
    </location>
    <ligand>
        <name>NAD(+)</name>
        <dbReference type="ChEBI" id="CHEBI:57540"/>
    </ligand>
</feature>
<feature type="binding site" evidence="1">
    <location>
        <begin position="83"/>
        <end position="84"/>
    </location>
    <ligand>
        <name>NAD(+)</name>
        <dbReference type="ChEBI" id="CHEBI:57540"/>
    </ligand>
</feature>
<feature type="binding site" evidence="1">
    <location>
        <position position="86"/>
    </location>
    <ligand>
        <name>substrate</name>
    </ligand>
</feature>
<feature type="binding site" evidence="1">
    <location>
        <position position="92"/>
    </location>
    <ligand>
        <name>substrate</name>
    </ligand>
</feature>
<feature type="binding site" evidence="1">
    <location>
        <position position="105"/>
    </location>
    <ligand>
        <name>NAD(+)</name>
        <dbReference type="ChEBI" id="CHEBI:57540"/>
    </ligand>
</feature>
<feature type="binding site" evidence="1">
    <location>
        <begin position="122"/>
        <end position="124"/>
    </location>
    <ligand>
        <name>NAD(+)</name>
        <dbReference type="ChEBI" id="CHEBI:57540"/>
    </ligand>
</feature>
<feature type="binding site" evidence="1">
    <location>
        <begin position="124"/>
        <end position="127"/>
    </location>
    <ligand>
        <name>substrate</name>
    </ligand>
</feature>
<feature type="binding site" evidence="1">
    <location>
        <position position="147"/>
    </location>
    <ligand>
        <name>NAD(+)</name>
        <dbReference type="ChEBI" id="CHEBI:57540"/>
    </ligand>
</feature>
<feature type="binding site" evidence="1">
    <location>
        <begin position="152"/>
        <end position="155"/>
    </location>
    <ligand>
        <name>substrate</name>
    </ligand>
</feature>
<feature type="binding site" evidence="1">
    <location>
        <position position="157"/>
    </location>
    <ligand>
        <name>beta-D-fructose 1,6-bisphosphate</name>
        <dbReference type="ChEBI" id="CHEBI:32966"/>
        <note>allosteric activator</note>
    </ligand>
</feature>
<feature type="binding site" evidence="1">
    <location>
        <position position="172"/>
    </location>
    <ligand>
        <name>beta-D-fructose 1,6-bisphosphate</name>
        <dbReference type="ChEBI" id="CHEBI:32966"/>
        <note>allosteric activator</note>
    </ligand>
</feature>
<feature type="binding site" evidence="1">
    <location>
        <position position="232"/>
    </location>
    <ligand>
        <name>substrate</name>
    </ligand>
</feature>
<feature type="modified residue" description="Phosphotyrosine" evidence="1">
    <location>
        <position position="223"/>
    </location>
</feature>
<accession>Q49YJ3</accession>
<sequence>MEYIKSNKVVLIGDGAVGSSYAFALVAQGVADELVIIDLDEDKVKGDVMDLNHAAPYGGSPVKIKAGSYKACHNADLVVITAGAAQKPGETRLDLIEKNTKIFKSIVSEVMASGFNGIFLVATNPVDVLTYVTQQVSGLPKEKVIGSGTILDTARFKYELAEEFGVSDRSVHGQIIGEHGDSELAVWSQANIAGQPLYQLLIDDPEKQHRIEEIFVNTRDAAYDIIQAKGATYYGIAMGLVHITKAILNNQNVVLTVSSRLEGEYGQEDVYIGVPTKINRQGAVEVFEIPLNDEEKTLFTRSVGILKEMQNKISHLIA</sequence>
<organism>
    <name type="scientific">Staphylococcus saprophyticus subsp. saprophyticus (strain ATCC 15305 / DSM 20229 / NCIMB 8711 / NCTC 7292 / S-41)</name>
    <dbReference type="NCBI Taxonomy" id="342451"/>
    <lineage>
        <taxon>Bacteria</taxon>
        <taxon>Bacillati</taxon>
        <taxon>Bacillota</taxon>
        <taxon>Bacilli</taxon>
        <taxon>Bacillales</taxon>
        <taxon>Staphylococcaceae</taxon>
        <taxon>Staphylococcus</taxon>
    </lineage>
</organism>